<dbReference type="EMBL" id="CP001048">
    <property type="protein sequence ID" value="ACC90974.1"/>
    <property type="molecule type" value="Genomic_DNA"/>
</dbReference>
<dbReference type="RefSeq" id="WP_002209527.1">
    <property type="nucleotide sequence ID" value="NZ_CP009780.1"/>
</dbReference>
<dbReference type="GeneID" id="96663308"/>
<dbReference type="KEGG" id="ypb:YPTS_4025"/>
<dbReference type="PATRIC" id="fig|502801.10.peg.3494"/>
<dbReference type="GO" id="GO:0005886">
    <property type="term" value="C:plasma membrane"/>
    <property type="evidence" value="ECO:0007669"/>
    <property type="project" value="UniProtKB-SubCell"/>
</dbReference>
<dbReference type="HAMAP" id="MF_01088">
    <property type="entry name" value="UspB"/>
    <property type="match status" value="1"/>
</dbReference>
<dbReference type="InterPro" id="IPR019598">
    <property type="entry name" value="Universal_stress_protein_B"/>
</dbReference>
<dbReference type="NCBIfam" id="NF003435">
    <property type="entry name" value="PRK04960.1"/>
    <property type="match status" value="1"/>
</dbReference>
<dbReference type="Pfam" id="PF10625">
    <property type="entry name" value="UspB"/>
    <property type="match status" value="1"/>
</dbReference>
<proteinExistence type="inferred from homology"/>
<protein>
    <recommendedName>
        <fullName evidence="1">Universal stress protein B</fullName>
    </recommendedName>
</protein>
<name>USPB_YERPB</name>
<feature type="chain" id="PRO_1000136924" description="Universal stress protein B">
    <location>
        <begin position="1"/>
        <end position="111"/>
    </location>
</feature>
<feature type="transmembrane region" description="Helical" evidence="1">
    <location>
        <begin position="1"/>
        <end position="21"/>
    </location>
</feature>
<feature type="transmembrane region" description="Helical" evidence="1">
    <location>
        <begin position="90"/>
        <end position="110"/>
    </location>
</feature>
<sequence>MISTVALFWALCVVCVVNMARYYSSLRALLVVLRGCDPLLYQYVDGGGFFTSHGQPSKQIRLVGYIFAQRYLDHHDPEFIRRCERLRGQFILTSALCGLVVVSLVALMLWY</sequence>
<accession>B2K6K2</accession>
<gene>
    <name evidence="1" type="primary">uspB</name>
    <name type="ordered locus">YPTS_4025</name>
</gene>
<organism>
    <name type="scientific">Yersinia pseudotuberculosis serotype IB (strain PB1/+)</name>
    <dbReference type="NCBI Taxonomy" id="502801"/>
    <lineage>
        <taxon>Bacteria</taxon>
        <taxon>Pseudomonadati</taxon>
        <taxon>Pseudomonadota</taxon>
        <taxon>Gammaproteobacteria</taxon>
        <taxon>Enterobacterales</taxon>
        <taxon>Yersiniaceae</taxon>
        <taxon>Yersinia</taxon>
    </lineage>
</organism>
<keyword id="KW-0997">Cell inner membrane</keyword>
<keyword id="KW-1003">Cell membrane</keyword>
<keyword id="KW-0472">Membrane</keyword>
<keyword id="KW-0812">Transmembrane</keyword>
<keyword id="KW-1133">Transmembrane helix</keyword>
<reference key="1">
    <citation type="submission" date="2008-04" db="EMBL/GenBank/DDBJ databases">
        <title>Complete sequence of Yersinia pseudotuberculosis PB1/+.</title>
        <authorList>
            <person name="Copeland A."/>
            <person name="Lucas S."/>
            <person name="Lapidus A."/>
            <person name="Glavina del Rio T."/>
            <person name="Dalin E."/>
            <person name="Tice H."/>
            <person name="Bruce D."/>
            <person name="Goodwin L."/>
            <person name="Pitluck S."/>
            <person name="Munk A.C."/>
            <person name="Brettin T."/>
            <person name="Detter J.C."/>
            <person name="Han C."/>
            <person name="Tapia R."/>
            <person name="Schmutz J."/>
            <person name="Larimer F."/>
            <person name="Land M."/>
            <person name="Hauser L."/>
            <person name="Challacombe J.F."/>
            <person name="Green L."/>
            <person name="Lindler L.E."/>
            <person name="Nikolich M.P."/>
            <person name="Richardson P."/>
        </authorList>
    </citation>
    <scope>NUCLEOTIDE SEQUENCE [LARGE SCALE GENOMIC DNA]</scope>
    <source>
        <strain>PB1/+</strain>
    </source>
</reference>
<comment type="subcellular location">
    <subcellularLocation>
        <location evidence="1">Cell inner membrane</location>
        <topology evidence="1">Multi-pass membrane protein</topology>
    </subcellularLocation>
</comment>
<comment type="similarity">
    <text evidence="1">Belongs to the universal stress protein B family.</text>
</comment>
<evidence type="ECO:0000255" key="1">
    <source>
        <dbReference type="HAMAP-Rule" id="MF_01088"/>
    </source>
</evidence>